<reference key="1">
    <citation type="journal article" date="2007" name="J. Bacteriol.">
        <title>Complete genome of acute rheumatic fever-associated serotype M5 Streptococcus pyogenes strain Manfredo.</title>
        <authorList>
            <person name="Holden M.T.G."/>
            <person name="Scott A."/>
            <person name="Cherevach I."/>
            <person name="Chillingworth T."/>
            <person name="Churcher C."/>
            <person name="Cronin A."/>
            <person name="Dowd L."/>
            <person name="Feltwell T."/>
            <person name="Hamlin N."/>
            <person name="Holroyd S."/>
            <person name="Jagels K."/>
            <person name="Moule S."/>
            <person name="Mungall K."/>
            <person name="Quail M.A."/>
            <person name="Price C."/>
            <person name="Rabbinowitsch E."/>
            <person name="Sharp S."/>
            <person name="Skelton J."/>
            <person name="Whitehead S."/>
            <person name="Barrell B.G."/>
            <person name="Kehoe M."/>
            <person name="Parkhill J."/>
        </authorList>
    </citation>
    <scope>NUCLEOTIDE SEQUENCE [LARGE SCALE GENOMIC DNA]</scope>
    <source>
        <strain>Manfredo</strain>
    </source>
</reference>
<accession>A2RCB2</accession>
<keyword id="KW-0030">Aminoacyl-tRNA synthetase</keyword>
<keyword id="KW-0067">ATP-binding</keyword>
<keyword id="KW-0963">Cytoplasm</keyword>
<keyword id="KW-0436">Ligase</keyword>
<keyword id="KW-0547">Nucleotide-binding</keyword>
<keyword id="KW-0648">Protein biosynthesis</keyword>
<comment type="catalytic activity">
    <reaction evidence="1">
        <text>tRNA(Leu) + L-leucine + ATP = L-leucyl-tRNA(Leu) + AMP + diphosphate</text>
        <dbReference type="Rhea" id="RHEA:11688"/>
        <dbReference type="Rhea" id="RHEA-COMP:9613"/>
        <dbReference type="Rhea" id="RHEA-COMP:9622"/>
        <dbReference type="ChEBI" id="CHEBI:30616"/>
        <dbReference type="ChEBI" id="CHEBI:33019"/>
        <dbReference type="ChEBI" id="CHEBI:57427"/>
        <dbReference type="ChEBI" id="CHEBI:78442"/>
        <dbReference type="ChEBI" id="CHEBI:78494"/>
        <dbReference type="ChEBI" id="CHEBI:456215"/>
        <dbReference type="EC" id="6.1.1.4"/>
    </reaction>
</comment>
<comment type="subcellular location">
    <subcellularLocation>
        <location evidence="1">Cytoplasm</location>
    </subcellularLocation>
</comment>
<comment type="similarity">
    <text evidence="1">Belongs to the class-I aminoacyl-tRNA synthetase family.</text>
</comment>
<protein>
    <recommendedName>
        <fullName evidence="1">Leucine--tRNA ligase</fullName>
        <ecNumber evidence="1">6.1.1.4</ecNumber>
    </recommendedName>
    <alternativeName>
        <fullName evidence="1">Leucyl-tRNA synthetase</fullName>
        <shortName evidence="1">LeuRS</shortName>
    </alternativeName>
</protein>
<name>SYL_STRPG</name>
<evidence type="ECO:0000255" key="1">
    <source>
        <dbReference type="HAMAP-Rule" id="MF_00049"/>
    </source>
</evidence>
<proteinExistence type="inferred from homology"/>
<dbReference type="EC" id="6.1.1.4" evidence="1"/>
<dbReference type="EMBL" id="AM295007">
    <property type="protein sequence ID" value="CAM29484.1"/>
    <property type="molecule type" value="Genomic_DNA"/>
</dbReference>
<dbReference type="RefSeq" id="WP_011888561.1">
    <property type="nucleotide sequence ID" value="NC_009332.1"/>
</dbReference>
<dbReference type="SMR" id="A2RCB2"/>
<dbReference type="KEGG" id="spf:SpyM50141"/>
<dbReference type="HOGENOM" id="CLU_004427_0_0_9"/>
<dbReference type="GO" id="GO:0005829">
    <property type="term" value="C:cytosol"/>
    <property type="evidence" value="ECO:0007669"/>
    <property type="project" value="TreeGrafter"/>
</dbReference>
<dbReference type="GO" id="GO:0002161">
    <property type="term" value="F:aminoacyl-tRNA deacylase activity"/>
    <property type="evidence" value="ECO:0007669"/>
    <property type="project" value="InterPro"/>
</dbReference>
<dbReference type="GO" id="GO:0005524">
    <property type="term" value="F:ATP binding"/>
    <property type="evidence" value="ECO:0007669"/>
    <property type="project" value="UniProtKB-UniRule"/>
</dbReference>
<dbReference type="GO" id="GO:0004823">
    <property type="term" value="F:leucine-tRNA ligase activity"/>
    <property type="evidence" value="ECO:0007669"/>
    <property type="project" value="UniProtKB-UniRule"/>
</dbReference>
<dbReference type="GO" id="GO:0006429">
    <property type="term" value="P:leucyl-tRNA aminoacylation"/>
    <property type="evidence" value="ECO:0007669"/>
    <property type="project" value="UniProtKB-UniRule"/>
</dbReference>
<dbReference type="CDD" id="cd07958">
    <property type="entry name" value="Anticodon_Ia_Leu_BEm"/>
    <property type="match status" value="1"/>
</dbReference>
<dbReference type="CDD" id="cd00812">
    <property type="entry name" value="LeuRS_core"/>
    <property type="match status" value="1"/>
</dbReference>
<dbReference type="FunFam" id="1.10.730.10:FF:000012">
    <property type="entry name" value="Leucine--tRNA ligase"/>
    <property type="match status" value="1"/>
</dbReference>
<dbReference type="FunFam" id="3.40.50.620:FF:000056">
    <property type="entry name" value="Leucine--tRNA ligase"/>
    <property type="match status" value="1"/>
</dbReference>
<dbReference type="FunFam" id="3.40.50.620:FF:000077">
    <property type="entry name" value="Leucine--tRNA ligase"/>
    <property type="match status" value="1"/>
</dbReference>
<dbReference type="FunFam" id="1.10.730.10:FF:000011">
    <property type="entry name" value="Leucine--tRNA ligase chloroplastic/mitochondrial"/>
    <property type="match status" value="1"/>
</dbReference>
<dbReference type="Gene3D" id="3.40.50.620">
    <property type="entry name" value="HUPs"/>
    <property type="match status" value="2"/>
</dbReference>
<dbReference type="Gene3D" id="1.10.730.10">
    <property type="entry name" value="Isoleucyl-tRNA Synthetase, Domain 1"/>
    <property type="match status" value="1"/>
</dbReference>
<dbReference type="Gene3D" id="3.90.740.10">
    <property type="entry name" value="Valyl/Leucyl/Isoleucyl-tRNA synthetase, editing domain"/>
    <property type="match status" value="1"/>
</dbReference>
<dbReference type="HAMAP" id="MF_00049_B">
    <property type="entry name" value="Leu_tRNA_synth_B"/>
    <property type="match status" value="1"/>
</dbReference>
<dbReference type="InterPro" id="IPR001412">
    <property type="entry name" value="aa-tRNA-synth_I_CS"/>
</dbReference>
<dbReference type="InterPro" id="IPR002300">
    <property type="entry name" value="aa-tRNA-synth_Ia"/>
</dbReference>
<dbReference type="InterPro" id="IPR002302">
    <property type="entry name" value="Leu-tRNA-ligase"/>
</dbReference>
<dbReference type="InterPro" id="IPR025709">
    <property type="entry name" value="Leu_tRNA-synth_edit"/>
</dbReference>
<dbReference type="InterPro" id="IPR013155">
    <property type="entry name" value="M/V/L/I-tRNA-synth_anticd-bd"/>
</dbReference>
<dbReference type="InterPro" id="IPR015413">
    <property type="entry name" value="Methionyl/Leucyl_tRNA_Synth"/>
</dbReference>
<dbReference type="InterPro" id="IPR014729">
    <property type="entry name" value="Rossmann-like_a/b/a_fold"/>
</dbReference>
<dbReference type="InterPro" id="IPR009080">
    <property type="entry name" value="tRNAsynth_Ia_anticodon-bd"/>
</dbReference>
<dbReference type="InterPro" id="IPR009008">
    <property type="entry name" value="Val/Leu/Ile-tRNA-synth_edit"/>
</dbReference>
<dbReference type="NCBIfam" id="TIGR00396">
    <property type="entry name" value="leuS_bact"/>
    <property type="match status" value="1"/>
</dbReference>
<dbReference type="PANTHER" id="PTHR43740:SF2">
    <property type="entry name" value="LEUCINE--TRNA LIGASE, MITOCHONDRIAL"/>
    <property type="match status" value="1"/>
</dbReference>
<dbReference type="PANTHER" id="PTHR43740">
    <property type="entry name" value="LEUCYL-TRNA SYNTHETASE"/>
    <property type="match status" value="1"/>
</dbReference>
<dbReference type="Pfam" id="PF08264">
    <property type="entry name" value="Anticodon_1"/>
    <property type="match status" value="1"/>
</dbReference>
<dbReference type="Pfam" id="PF00133">
    <property type="entry name" value="tRNA-synt_1"/>
    <property type="match status" value="2"/>
</dbReference>
<dbReference type="Pfam" id="PF13603">
    <property type="entry name" value="tRNA-synt_1_2"/>
    <property type="match status" value="1"/>
</dbReference>
<dbReference type="Pfam" id="PF09334">
    <property type="entry name" value="tRNA-synt_1g"/>
    <property type="match status" value="1"/>
</dbReference>
<dbReference type="PRINTS" id="PR00985">
    <property type="entry name" value="TRNASYNTHLEU"/>
</dbReference>
<dbReference type="SUPFAM" id="SSF47323">
    <property type="entry name" value="Anticodon-binding domain of a subclass of class I aminoacyl-tRNA synthetases"/>
    <property type="match status" value="1"/>
</dbReference>
<dbReference type="SUPFAM" id="SSF52374">
    <property type="entry name" value="Nucleotidylyl transferase"/>
    <property type="match status" value="1"/>
</dbReference>
<dbReference type="SUPFAM" id="SSF50677">
    <property type="entry name" value="ValRS/IleRS/LeuRS editing domain"/>
    <property type="match status" value="1"/>
</dbReference>
<dbReference type="PROSITE" id="PS00178">
    <property type="entry name" value="AA_TRNA_LIGASE_I"/>
    <property type="match status" value="1"/>
</dbReference>
<feature type="chain" id="PRO_1000009448" description="Leucine--tRNA ligase">
    <location>
        <begin position="1"/>
        <end position="833"/>
    </location>
</feature>
<feature type="short sequence motif" description="'HIGH' region">
    <location>
        <begin position="41"/>
        <end position="52"/>
    </location>
</feature>
<feature type="short sequence motif" description="'KMSKS' region">
    <location>
        <begin position="610"/>
        <end position="614"/>
    </location>
</feature>
<feature type="binding site" evidence="1">
    <location>
        <position position="613"/>
    </location>
    <ligand>
        <name>ATP</name>
        <dbReference type="ChEBI" id="CHEBI:30616"/>
    </ligand>
</feature>
<sequence length="833" mass="93805">MTFYDHTAIEPKWQAFWADNHTFKTGTDASKPKFYALDMFPYPSGAGLHVGHPEGYTATDILSRFKRAQGHNVLHPMGWDAFGLPAEQYAMDTGNDPAEFTAENIANFKRQINALGFSYDWDREVNTTDPNYYKWTQWIFTKLYEKGLAYEAEVPVNWVEELGTAIANEEVLPDGTSERGGYPVVRKPMRQWMLKITAYAERLLEDLEEVDWPESIKDMQRNWIGKSTGANVTFKVKDTDKDFTVFTTRPDTLFGATYAVLAPEHALVDAITTADQAEAVADYKRQASLKSDLARTDLAKEKTGVWTGSYAINPVNGNEMPVWIADYVLASYGTGAIMAVPAHDERDWEFAKQFNLDIIPVLEGGNVEEAAFTEDGLHINSGFLDGLDKASAIAKMVEWLEAEGVGNEKVTYRLRDWLFSRQRYWGEPIPIIHWEDGTSTAVPESELPLVLPVTKDIRPSGTGESPLANVTDWLEVTREDGVKGRRETNTMPQWAGSSWYYLRYIDPHNTEKLADEELLKQWLPVDIYVGGAEHAVLHLLYARFWHKVLYDLGVVPTKEPFQKLFNQGMILGTSYRDSRGALVATDKVEKRDGSFFHLETGEELEQAPAKMSKSLKNVVNPDDVVEQYGADTLRVYEMFMGPLDASIAWSEEGLEGSRKFLDRVYRLITTKEITEENSGALDKVYNETVKAVTEQVDQMKFNTAIAQLMVFVNAANKEDKLFSDYAKGFVQLIAPFAPHLGEELWQALTASGESISYVPWPSYDESKLVENDVEIVVQIKGKVKAKLVVAKDLSREELQEVALANEKVQAEIAGKDIIKVIAVPNKLVNIVIK</sequence>
<gene>
    <name evidence="1" type="primary">leuS</name>
    <name type="ordered locus">SpyM50141</name>
</gene>
<organism>
    <name type="scientific">Streptococcus pyogenes serotype M5 (strain Manfredo)</name>
    <dbReference type="NCBI Taxonomy" id="160491"/>
    <lineage>
        <taxon>Bacteria</taxon>
        <taxon>Bacillati</taxon>
        <taxon>Bacillota</taxon>
        <taxon>Bacilli</taxon>
        <taxon>Lactobacillales</taxon>
        <taxon>Streptococcaceae</taxon>
        <taxon>Streptococcus</taxon>
    </lineage>
</organism>